<evidence type="ECO:0000255" key="1">
    <source>
        <dbReference type="HAMAP-Rule" id="MF_01678"/>
    </source>
</evidence>
<evidence type="ECO:0000305" key="2"/>
<name>MTNA_PARMW</name>
<keyword id="KW-0028">Amino-acid biosynthesis</keyword>
<keyword id="KW-0413">Isomerase</keyword>
<keyword id="KW-0486">Methionine biosynthesis</keyword>
<accession>Q7U4V1</accession>
<comment type="function">
    <text evidence="1">Catalyzes the interconversion of methylthioribose-1-phosphate (MTR-1-P) into methylthioribulose-1-phosphate (MTRu-1-P).</text>
</comment>
<comment type="catalytic activity">
    <reaction evidence="1">
        <text>5-(methylsulfanyl)-alpha-D-ribose 1-phosphate = 5-(methylsulfanyl)-D-ribulose 1-phosphate</text>
        <dbReference type="Rhea" id="RHEA:19989"/>
        <dbReference type="ChEBI" id="CHEBI:58533"/>
        <dbReference type="ChEBI" id="CHEBI:58548"/>
        <dbReference type="EC" id="5.3.1.23"/>
    </reaction>
</comment>
<comment type="pathway">
    <text evidence="1">Amino-acid biosynthesis; L-methionine biosynthesis via salvage pathway; L-methionine from S-methyl-5-thio-alpha-D-ribose 1-phosphate: step 1/6.</text>
</comment>
<comment type="similarity">
    <text evidence="2">Belongs to the eIF-2B alpha/beta/delta subunits family. MtnA subfamily.</text>
</comment>
<comment type="sequence caution" evidence="2">
    <conflict type="erroneous initiation">
        <sequence resource="EMBL-CDS" id="CAE08477"/>
    </conflict>
</comment>
<feature type="chain" id="PRO_0000357252" description="Methylthioribose-1-phosphate isomerase">
    <location>
        <begin position="1"/>
        <end position="337"/>
    </location>
</feature>
<feature type="active site" description="Proton donor" evidence="1">
    <location>
        <position position="225"/>
    </location>
</feature>
<feature type="binding site" evidence="1">
    <location>
        <begin position="47"/>
        <end position="49"/>
    </location>
    <ligand>
        <name>substrate</name>
    </ligand>
</feature>
<feature type="binding site" evidence="1">
    <location>
        <position position="81"/>
    </location>
    <ligand>
        <name>substrate</name>
    </ligand>
</feature>
<feature type="binding site" evidence="1">
    <location>
        <position position="184"/>
    </location>
    <ligand>
        <name>substrate</name>
    </ligand>
</feature>
<feature type="binding site" evidence="1">
    <location>
        <begin position="235"/>
        <end position="236"/>
    </location>
    <ligand>
        <name>substrate</name>
    </ligand>
</feature>
<feature type="site" description="Transition state stabilizer" evidence="1">
    <location>
        <position position="145"/>
    </location>
</feature>
<dbReference type="EC" id="5.3.1.23" evidence="1"/>
<dbReference type="EMBL" id="BX569694">
    <property type="protein sequence ID" value="CAE08477.1"/>
    <property type="status" value="ALT_INIT"/>
    <property type="molecule type" value="Genomic_DNA"/>
</dbReference>
<dbReference type="RefSeq" id="WP_042503812.1">
    <property type="nucleotide sequence ID" value="NC_005070.1"/>
</dbReference>
<dbReference type="SMR" id="Q7U4V1"/>
<dbReference type="STRING" id="84588.SYNW1962"/>
<dbReference type="KEGG" id="syw:SYNW1962"/>
<dbReference type="eggNOG" id="COG0182">
    <property type="taxonomic scope" value="Bacteria"/>
</dbReference>
<dbReference type="HOGENOM" id="CLU_016218_1_2_3"/>
<dbReference type="UniPathway" id="UPA00904">
    <property type="reaction ID" value="UER00874"/>
</dbReference>
<dbReference type="Proteomes" id="UP000001422">
    <property type="component" value="Chromosome"/>
</dbReference>
<dbReference type="GO" id="GO:0046523">
    <property type="term" value="F:S-methyl-5-thioribose-1-phosphate isomerase activity"/>
    <property type="evidence" value="ECO:0007669"/>
    <property type="project" value="UniProtKB-UniRule"/>
</dbReference>
<dbReference type="GO" id="GO:0019509">
    <property type="term" value="P:L-methionine salvage from methylthioadenosine"/>
    <property type="evidence" value="ECO:0007669"/>
    <property type="project" value="UniProtKB-UniRule"/>
</dbReference>
<dbReference type="FunFam" id="3.40.50.10470:FF:000006">
    <property type="entry name" value="Methylthioribose-1-phosphate isomerase"/>
    <property type="match status" value="1"/>
</dbReference>
<dbReference type="Gene3D" id="1.20.120.420">
    <property type="entry name" value="translation initiation factor eif-2b, domain 1"/>
    <property type="match status" value="1"/>
</dbReference>
<dbReference type="Gene3D" id="3.40.50.10470">
    <property type="entry name" value="Translation initiation factor eif-2b, domain 2"/>
    <property type="match status" value="1"/>
</dbReference>
<dbReference type="HAMAP" id="MF_01678">
    <property type="entry name" value="Salvage_MtnA"/>
    <property type="match status" value="1"/>
</dbReference>
<dbReference type="InterPro" id="IPR000649">
    <property type="entry name" value="IF-2B-related"/>
</dbReference>
<dbReference type="InterPro" id="IPR005251">
    <property type="entry name" value="IF-M1Pi"/>
</dbReference>
<dbReference type="InterPro" id="IPR042529">
    <property type="entry name" value="IF_2B-like_C"/>
</dbReference>
<dbReference type="InterPro" id="IPR011559">
    <property type="entry name" value="Initiation_fac_2B_a/b/d"/>
</dbReference>
<dbReference type="InterPro" id="IPR027363">
    <property type="entry name" value="M1Pi_N"/>
</dbReference>
<dbReference type="InterPro" id="IPR037171">
    <property type="entry name" value="NagB/RpiA_transferase-like"/>
</dbReference>
<dbReference type="NCBIfam" id="TIGR00524">
    <property type="entry name" value="eIF-2B_rel"/>
    <property type="match status" value="1"/>
</dbReference>
<dbReference type="NCBIfam" id="NF004326">
    <property type="entry name" value="PRK05720.1"/>
    <property type="match status" value="1"/>
</dbReference>
<dbReference type="NCBIfam" id="TIGR00512">
    <property type="entry name" value="salvage_mtnA"/>
    <property type="match status" value="1"/>
</dbReference>
<dbReference type="PANTHER" id="PTHR43475">
    <property type="entry name" value="METHYLTHIORIBOSE-1-PHOSPHATE ISOMERASE"/>
    <property type="match status" value="1"/>
</dbReference>
<dbReference type="PANTHER" id="PTHR43475:SF1">
    <property type="entry name" value="METHYLTHIORIBOSE-1-PHOSPHATE ISOMERASE"/>
    <property type="match status" value="1"/>
</dbReference>
<dbReference type="Pfam" id="PF01008">
    <property type="entry name" value="IF-2B"/>
    <property type="match status" value="1"/>
</dbReference>
<dbReference type="SUPFAM" id="SSF100950">
    <property type="entry name" value="NagB/RpiA/CoA transferase-like"/>
    <property type="match status" value="1"/>
</dbReference>
<gene>
    <name evidence="1" type="primary">mtnA</name>
    <name type="ordered locus">SYNW1962</name>
</gene>
<reference key="1">
    <citation type="journal article" date="2003" name="Nature">
        <title>The genome of a motile marine Synechococcus.</title>
        <authorList>
            <person name="Palenik B."/>
            <person name="Brahamsha B."/>
            <person name="Larimer F.W."/>
            <person name="Land M.L."/>
            <person name="Hauser L."/>
            <person name="Chain P."/>
            <person name="Lamerdin J.E."/>
            <person name="Regala W."/>
            <person name="Allen E.E."/>
            <person name="McCarren J."/>
            <person name="Paulsen I.T."/>
            <person name="Dufresne A."/>
            <person name="Partensky F."/>
            <person name="Webb E.A."/>
            <person name="Waterbury J."/>
        </authorList>
    </citation>
    <scope>NUCLEOTIDE SEQUENCE [LARGE SCALE GENOMIC DNA]</scope>
    <source>
        <strain>WH8102</strain>
    </source>
</reference>
<organism>
    <name type="scientific">Parasynechococcus marenigrum (strain WH8102)</name>
    <dbReference type="NCBI Taxonomy" id="84588"/>
    <lineage>
        <taxon>Bacteria</taxon>
        <taxon>Bacillati</taxon>
        <taxon>Cyanobacteriota</taxon>
        <taxon>Cyanophyceae</taxon>
        <taxon>Synechococcales</taxon>
        <taxon>Prochlorococcaceae</taxon>
        <taxon>Parasynechococcus</taxon>
        <taxon>Parasynechococcus marenigrum</taxon>
    </lineage>
</organism>
<sequence length="337" mass="35488">MTLPPSLRWTGDHLELLDQRRLPEEVSFLKLHQWRDVAEAIATMAVRGAPAIGVAAAWGVVLAAQANEDLDLAVSVLKSSRPTAVNLGWALDRIKASPAAQEPVDPQGLAAVAAALEADDRARTQTLVDHGVGLLASGSRVLHHCHTGAIATAGVGTALGVIAAGHARGVVRHAWLDETRPRLQGAALSAWELGCLGVPCTVIVDGASGLLMRRQEVDAVLVGCDRVAANGDVANKVGTYNLALVARAHGIPFYVCAPGSSMDRSTSDGDAITIEERPQEEITQHRGQRLAAPGAAAWNPAFDITPAHLVTALITEFGVIRPPYRDALQALPLDRQP</sequence>
<protein>
    <recommendedName>
        <fullName evidence="1">Methylthioribose-1-phosphate isomerase</fullName>
        <shortName evidence="1">M1Pi</shortName>
        <shortName evidence="1">MTR-1-P isomerase</shortName>
        <ecNumber evidence="1">5.3.1.23</ecNumber>
    </recommendedName>
    <alternativeName>
        <fullName evidence="1">S-methyl-5-thioribose-1-phosphate isomerase</fullName>
    </alternativeName>
</protein>
<proteinExistence type="inferred from homology"/>